<feature type="chain" id="PRO_1000119663" description="Chaperone protein DnaK">
    <location>
        <begin position="1"/>
        <end position="605"/>
    </location>
</feature>
<feature type="region of interest" description="Disordered" evidence="2">
    <location>
        <begin position="575"/>
        <end position="605"/>
    </location>
</feature>
<feature type="compositionally biased region" description="Low complexity" evidence="2">
    <location>
        <begin position="575"/>
        <end position="584"/>
    </location>
</feature>
<feature type="compositionally biased region" description="Acidic residues" evidence="2">
    <location>
        <begin position="593"/>
        <end position="605"/>
    </location>
</feature>
<feature type="modified residue" description="Phosphothreonine; by autocatalysis" evidence="1">
    <location>
        <position position="173"/>
    </location>
</feature>
<organism>
    <name type="scientific">Anoxybacillus flavithermus (strain DSM 21510 / WK1)</name>
    <dbReference type="NCBI Taxonomy" id="491915"/>
    <lineage>
        <taxon>Bacteria</taxon>
        <taxon>Bacillati</taxon>
        <taxon>Bacillota</taxon>
        <taxon>Bacilli</taxon>
        <taxon>Bacillales</taxon>
        <taxon>Anoxybacillaceae</taxon>
        <taxon>Anoxybacillus</taxon>
    </lineage>
</organism>
<gene>
    <name evidence="1" type="primary">dnaK</name>
    <name type="ordered locus">Aflv_0835</name>
</gene>
<evidence type="ECO:0000255" key="1">
    <source>
        <dbReference type="HAMAP-Rule" id="MF_00332"/>
    </source>
</evidence>
<evidence type="ECO:0000256" key="2">
    <source>
        <dbReference type="SAM" id="MobiDB-lite"/>
    </source>
</evidence>
<proteinExistence type="inferred from homology"/>
<sequence length="605" mass="65862">MSKIIGIDLGTTNSCVAVLEGGEPKVIPNPEGGRTTPSVVAFKNGERLVGEVAKRQAITNPNTIISIKRHMGTDYKVQIEGKEYTPQQISAMILQYLKSYAEAYLGEPVTRAVITVPAYFNDAQRQATKDAGRIAGLEVERIINEPTAAALAYGLDKMDEDQTILVYDLGGGTFDVSILELGDGVFEVKATAGDNHLGGDDFDQVIIDYLVEEFKKEHGIDLSKDKMALQRLKDAAEKAKKELSGVMQTQISLPFISANENGPLHLEMTLTRAKFEELSAHLVERTMGPVRQALKDAGLTPADIDKVILVGGSTRIPAVQEAIKKEIGKEPHKGVNPDEVVAIGAAIQGGVIAGDVKDVVLLDVTPLSLGIETMGGVFTKLIERNTTIPTSKSQIFTTAADNQTAVDIHVLQGERPMAADNKTLGRFQLTDIPPAPRGVPQIEVTFDIDANGIVHVRAKDLGTNKEQSITIKSSSGLSEEEIQRMIKEAEENAEADRKRKEEVELRNEADHLIFTTEKTLKELEGKVDEADVKKAQEAKDALKAALDGKDIEDIRAKKNALQEVVQQLSVKLYEQAAKQAQAQQSEGKKDDNVVDAEFEEVKEDK</sequence>
<accession>B7GKC8</accession>
<comment type="function">
    <text evidence="1">Acts as a chaperone.</text>
</comment>
<comment type="induction">
    <text evidence="1">By stress conditions e.g. heat shock.</text>
</comment>
<comment type="similarity">
    <text evidence="1">Belongs to the heat shock protein 70 family.</text>
</comment>
<dbReference type="EMBL" id="CP000922">
    <property type="protein sequence ID" value="ACJ33213.1"/>
    <property type="molecule type" value="Genomic_DNA"/>
</dbReference>
<dbReference type="RefSeq" id="WP_012574503.1">
    <property type="nucleotide sequence ID" value="NC_011567.1"/>
</dbReference>
<dbReference type="SMR" id="B7GKC8"/>
<dbReference type="STRING" id="491915.Aflv_0835"/>
<dbReference type="GeneID" id="7037092"/>
<dbReference type="KEGG" id="afl:Aflv_0835"/>
<dbReference type="PATRIC" id="fig|491915.6.peg.855"/>
<dbReference type="eggNOG" id="COG0443">
    <property type="taxonomic scope" value="Bacteria"/>
</dbReference>
<dbReference type="HOGENOM" id="CLU_005965_2_4_9"/>
<dbReference type="Proteomes" id="UP000000742">
    <property type="component" value="Chromosome"/>
</dbReference>
<dbReference type="GO" id="GO:0005524">
    <property type="term" value="F:ATP binding"/>
    <property type="evidence" value="ECO:0007669"/>
    <property type="project" value="UniProtKB-UniRule"/>
</dbReference>
<dbReference type="GO" id="GO:0140662">
    <property type="term" value="F:ATP-dependent protein folding chaperone"/>
    <property type="evidence" value="ECO:0007669"/>
    <property type="project" value="InterPro"/>
</dbReference>
<dbReference type="GO" id="GO:0051082">
    <property type="term" value="F:unfolded protein binding"/>
    <property type="evidence" value="ECO:0007669"/>
    <property type="project" value="InterPro"/>
</dbReference>
<dbReference type="CDD" id="cd10234">
    <property type="entry name" value="ASKHA_NBD_HSP70_DnaK-like"/>
    <property type="match status" value="1"/>
</dbReference>
<dbReference type="FunFam" id="2.60.34.10:FF:000014">
    <property type="entry name" value="Chaperone protein DnaK HSP70"/>
    <property type="match status" value="1"/>
</dbReference>
<dbReference type="FunFam" id="3.30.420.40:FF:000020">
    <property type="entry name" value="Chaperone protein HscA homolog"/>
    <property type="match status" value="1"/>
</dbReference>
<dbReference type="FunFam" id="3.30.420.40:FF:000545">
    <property type="entry name" value="Endoplasmic reticulum chaperone BiP"/>
    <property type="match status" value="1"/>
</dbReference>
<dbReference type="FunFam" id="1.20.1270.10:FF:000004">
    <property type="entry name" value="Molecular chaperone DnaK"/>
    <property type="match status" value="1"/>
</dbReference>
<dbReference type="FunFam" id="3.90.640.10:FF:000003">
    <property type="entry name" value="Molecular chaperone DnaK"/>
    <property type="match status" value="1"/>
</dbReference>
<dbReference type="Gene3D" id="1.20.1270.10">
    <property type="match status" value="1"/>
</dbReference>
<dbReference type="Gene3D" id="3.30.420.40">
    <property type="match status" value="2"/>
</dbReference>
<dbReference type="Gene3D" id="3.90.640.10">
    <property type="entry name" value="Actin, Chain A, domain 4"/>
    <property type="match status" value="1"/>
</dbReference>
<dbReference type="Gene3D" id="2.60.34.10">
    <property type="entry name" value="Substrate Binding Domain Of DNAk, Chain A, domain 1"/>
    <property type="match status" value="1"/>
</dbReference>
<dbReference type="HAMAP" id="MF_00332">
    <property type="entry name" value="DnaK"/>
    <property type="match status" value="1"/>
</dbReference>
<dbReference type="InterPro" id="IPR043129">
    <property type="entry name" value="ATPase_NBD"/>
</dbReference>
<dbReference type="InterPro" id="IPR012725">
    <property type="entry name" value="Chaperone_DnaK"/>
</dbReference>
<dbReference type="InterPro" id="IPR018181">
    <property type="entry name" value="Heat_shock_70_CS"/>
</dbReference>
<dbReference type="InterPro" id="IPR029048">
    <property type="entry name" value="HSP70_C_sf"/>
</dbReference>
<dbReference type="InterPro" id="IPR029047">
    <property type="entry name" value="HSP70_peptide-bd_sf"/>
</dbReference>
<dbReference type="InterPro" id="IPR013126">
    <property type="entry name" value="Hsp_70_fam"/>
</dbReference>
<dbReference type="NCBIfam" id="NF001413">
    <property type="entry name" value="PRK00290.1"/>
    <property type="match status" value="1"/>
</dbReference>
<dbReference type="NCBIfam" id="TIGR02350">
    <property type="entry name" value="prok_dnaK"/>
    <property type="match status" value="1"/>
</dbReference>
<dbReference type="PANTHER" id="PTHR19375">
    <property type="entry name" value="HEAT SHOCK PROTEIN 70KDA"/>
    <property type="match status" value="1"/>
</dbReference>
<dbReference type="Pfam" id="PF00012">
    <property type="entry name" value="HSP70"/>
    <property type="match status" value="1"/>
</dbReference>
<dbReference type="PRINTS" id="PR00301">
    <property type="entry name" value="HEATSHOCK70"/>
</dbReference>
<dbReference type="SUPFAM" id="SSF53067">
    <property type="entry name" value="Actin-like ATPase domain"/>
    <property type="match status" value="2"/>
</dbReference>
<dbReference type="SUPFAM" id="SSF100934">
    <property type="entry name" value="Heat shock protein 70kD (HSP70), C-terminal subdomain"/>
    <property type="match status" value="1"/>
</dbReference>
<dbReference type="SUPFAM" id="SSF100920">
    <property type="entry name" value="Heat shock protein 70kD (HSP70), peptide-binding domain"/>
    <property type="match status" value="1"/>
</dbReference>
<dbReference type="PROSITE" id="PS00297">
    <property type="entry name" value="HSP70_1"/>
    <property type="match status" value="1"/>
</dbReference>
<dbReference type="PROSITE" id="PS00329">
    <property type="entry name" value="HSP70_2"/>
    <property type="match status" value="1"/>
</dbReference>
<dbReference type="PROSITE" id="PS01036">
    <property type="entry name" value="HSP70_3"/>
    <property type="match status" value="1"/>
</dbReference>
<name>DNAK_ANOFW</name>
<protein>
    <recommendedName>
        <fullName evidence="1">Chaperone protein DnaK</fullName>
    </recommendedName>
    <alternativeName>
        <fullName evidence="1">HSP70</fullName>
    </alternativeName>
    <alternativeName>
        <fullName evidence="1">Heat shock 70 kDa protein</fullName>
    </alternativeName>
    <alternativeName>
        <fullName evidence="1">Heat shock protein 70</fullName>
    </alternativeName>
</protein>
<reference key="1">
    <citation type="journal article" date="2008" name="Genome Biol.">
        <title>Encapsulated in silica: genome, proteome and physiology of the thermophilic bacterium Anoxybacillus flavithermus WK1.</title>
        <authorList>
            <person name="Saw J.H."/>
            <person name="Mountain B.W."/>
            <person name="Feng L."/>
            <person name="Omelchenko M.V."/>
            <person name="Hou S."/>
            <person name="Saito J.A."/>
            <person name="Stott M.B."/>
            <person name="Li D."/>
            <person name="Zhao G."/>
            <person name="Wu J."/>
            <person name="Galperin M.Y."/>
            <person name="Koonin E.V."/>
            <person name="Makarova K.S."/>
            <person name="Wolf Y.I."/>
            <person name="Rigden D.J."/>
            <person name="Dunfield P.F."/>
            <person name="Wang L."/>
            <person name="Alam M."/>
        </authorList>
    </citation>
    <scope>NUCLEOTIDE SEQUENCE [LARGE SCALE GENOMIC DNA]</scope>
    <source>
        <strain>DSM 21510 / WK1</strain>
    </source>
</reference>
<keyword id="KW-0067">ATP-binding</keyword>
<keyword id="KW-0143">Chaperone</keyword>
<keyword id="KW-0547">Nucleotide-binding</keyword>
<keyword id="KW-0597">Phosphoprotein</keyword>
<keyword id="KW-0346">Stress response</keyword>